<sequence>MKAGQQGRSCGLISPYLAPKNQSERFAFIAEWYDPNASLLRRYELLYYPVDGSVEMHDVKNRRTFLKRTKYEDLRVEDLFIGNKVNVFSRQLVLIDYGDQYTARQLGSRKEKTLALIKPDAVSKAGEIIEMINKSGFTITKLRMMTLSRKEAADFHVDHHSRPFYNELIQFITSGPVIAMEILRDDAICEWKRLLGPANSGIARSEAPGSVRALFGTDGIRNAAHGSDTFESAAREMELFFPSSGGCGPANTAKFTNCTCCIIKPHAISEGMLGKILIAIRDACFEISAIQMFNMDRANVEEFYEVYKGVVSEYNDMVTELYSGPCVAIEIQQSNPTKTFREFCGPSDPEIARHLRPETLRANFGKTKVQNAVHCTDLPEDGLLEVQYFFKILDN</sequence>
<dbReference type="EC" id="3.1.-.-" evidence="2"/>
<dbReference type="EC" id="2.7.-.-" evidence="2"/>
<dbReference type="EMBL" id="AF202049">
    <property type="protein sequence ID" value="AAF20907.1"/>
    <property type="molecule type" value="mRNA"/>
</dbReference>
<dbReference type="EMBL" id="CH473958">
    <property type="protein sequence ID" value="EDM09355.1"/>
    <property type="molecule type" value="Genomic_DNA"/>
</dbReference>
<dbReference type="EMBL" id="BC060314">
    <property type="protein sequence ID" value="AAH60314.1"/>
    <property type="molecule type" value="mRNA"/>
</dbReference>
<dbReference type="RefSeq" id="NP_612541.1">
    <property type="nucleotide sequence ID" value="NM_138532.1"/>
</dbReference>
<dbReference type="SMR" id="Q9QXL7"/>
<dbReference type="FunCoup" id="Q9QXL7">
    <property type="interactions" value="902"/>
</dbReference>
<dbReference type="STRING" id="10116.ENSRNOP00000055684"/>
<dbReference type="PhosphoSitePlus" id="Q9QXL7"/>
<dbReference type="PaxDb" id="10116-ENSRNOP00000055684"/>
<dbReference type="Ensembl" id="ENSRNOT00055030019">
    <property type="protein sequence ID" value="ENSRNOP00055024111"/>
    <property type="gene ID" value="ENSRNOG00055017744"/>
</dbReference>
<dbReference type="Ensembl" id="ENSRNOT00060016105">
    <property type="protein sequence ID" value="ENSRNOP00060012599"/>
    <property type="gene ID" value="ENSRNOG00060009526"/>
</dbReference>
<dbReference type="GeneID" id="171566"/>
<dbReference type="KEGG" id="rno:171566"/>
<dbReference type="UCSC" id="RGD:619880">
    <property type="organism name" value="rat"/>
</dbReference>
<dbReference type="AGR" id="RGD:619880"/>
<dbReference type="CTD" id="29922"/>
<dbReference type="RGD" id="619880">
    <property type="gene designation" value="Nme7"/>
</dbReference>
<dbReference type="eggNOG" id="KOG0888">
    <property type="taxonomic scope" value="Eukaryota"/>
</dbReference>
<dbReference type="InParanoid" id="Q9QXL7"/>
<dbReference type="OrthoDB" id="270127at2759"/>
<dbReference type="PhylomeDB" id="Q9QXL7"/>
<dbReference type="Reactome" id="R-RNO-380270">
    <property type="pathway name" value="Recruitment of mitotic centrosome proteins and complexes"/>
</dbReference>
<dbReference type="Reactome" id="R-RNO-380320">
    <property type="pathway name" value="Recruitment of NuMA to mitotic centrosomes"/>
</dbReference>
<dbReference type="PRO" id="PR:Q9QXL7"/>
<dbReference type="Proteomes" id="UP000002494">
    <property type="component" value="Unplaced"/>
</dbReference>
<dbReference type="Proteomes" id="UP000234681">
    <property type="component" value="Chromosome 13"/>
</dbReference>
<dbReference type="GO" id="GO:0160111">
    <property type="term" value="C:axonemal A tubule inner sheath"/>
    <property type="evidence" value="ECO:0000250"/>
    <property type="project" value="UniProtKB"/>
</dbReference>
<dbReference type="GO" id="GO:0005879">
    <property type="term" value="C:axonemal microtubule"/>
    <property type="evidence" value="ECO:0000250"/>
    <property type="project" value="UniProtKB"/>
</dbReference>
<dbReference type="GO" id="GO:0005813">
    <property type="term" value="C:centrosome"/>
    <property type="evidence" value="ECO:0000250"/>
    <property type="project" value="UniProtKB"/>
</dbReference>
<dbReference type="GO" id="GO:0036064">
    <property type="term" value="C:ciliary basal body"/>
    <property type="evidence" value="ECO:0000266"/>
    <property type="project" value="RGD"/>
</dbReference>
<dbReference type="GO" id="GO:0005929">
    <property type="term" value="C:cilium"/>
    <property type="evidence" value="ECO:0000250"/>
    <property type="project" value="UniProtKB"/>
</dbReference>
<dbReference type="GO" id="GO:0005737">
    <property type="term" value="C:cytoplasm"/>
    <property type="evidence" value="ECO:0000250"/>
    <property type="project" value="UniProtKB"/>
</dbReference>
<dbReference type="GO" id="GO:0005576">
    <property type="term" value="C:extracellular region"/>
    <property type="evidence" value="ECO:0007669"/>
    <property type="project" value="GOC"/>
</dbReference>
<dbReference type="GO" id="GO:0000931">
    <property type="term" value="C:gamma-tubulin ring complex"/>
    <property type="evidence" value="ECO:0000250"/>
    <property type="project" value="UniProtKB"/>
</dbReference>
<dbReference type="GO" id="GO:0005634">
    <property type="term" value="C:nucleus"/>
    <property type="evidence" value="ECO:0000250"/>
    <property type="project" value="UniProtKB"/>
</dbReference>
<dbReference type="GO" id="GO:0005886">
    <property type="term" value="C:plasma membrane"/>
    <property type="evidence" value="ECO:0007669"/>
    <property type="project" value="GOC"/>
</dbReference>
<dbReference type="GO" id="GO:0036126">
    <property type="term" value="C:sperm flagellum"/>
    <property type="evidence" value="ECO:0000250"/>
    <property type="project" value="UniProtKB"/>
</dbReference>
<dbReference type="GO" id="GO:0005819">
    <property type="term" value="C:spindle"/>
    <property type="evidence" value="ECO:0007669"/>
    <property type="project" value="UniProtKB-SubCell"/>
</dbReference>
<dbReference type="GO" id="GO:0008408">
    <property type="term" value="F:3'-5' exonuclease activity"/>
    <property type="evidence" value="ECO:0000250"/>
    <property type="project" value="UniProtKB"/>
</dbReference>
<dbReference type="GO" id="GO:0005524">
    <property type="term" value="F:ATP binding"/>
    <property type="evidence" value="ECO:0007669"/>
    <property type="project" value="InterPro"/>
</dbReference>
<dbReference type="GO" id="GO:0004672">
    <property type="term" value="F:protein kinase activity"/>
    <property type="evidence" value="ECO:0000266"/>
    <property type="project" value="RGD"/>
</dbReference>
<dbReference type="GO" id="GO:0007420">
    <property type="term" value="P:brain development"/>
    <property type="evidence" value="ECO:0000266"/>
    <property type="project" value="RGD"/>
</dbReference>
<dbReference type="GO" id="GO:1990830">
    <property type="term" value="P:cellular response to leukemia inhibitory factor"/>
    <property type="evidence" value="ECO:0000266"/>
    <property type="project" value="RGD"/>
</dbReference>
<dbReference type="GO" id="GO:0006241">
    <property type="term" value="P:CTP biosynthetic process"/>
    <property type="evidence" value="ECO:0007669"/>
    <property type="project" value="InterPro"/>
</dbReference>
<dbReference type="GO" id="GO:0007368">
    <property type="term" value="P:determination of left/right symmetry"/>
    <property type="evidence" value="ECO:0000266"/>
    <property type="project" value="RGD"/>
</dbReference>
<dbReference type="GO" id="GO:0003351">
    <property type="term" value="P:epithelial cilium movement involved in extracellular fluid movement"/>
    <property type="evidence" value="ECO:0000266"/>
    <property type="project" value="RGD"/>
</dbReference>
<dbReference type="GO" id="GO:0030317">
    <property type="term" value="P:flagellated sperm motility"/>
    <property type="evidence" value="ECO:0000250"/>
    <property type="project" value="UniProtKB"/>
</dbReference>
<dbReference type="GO" id="GO:0006183">
    <property type="term" value="P:GTP biosynthetic process"/>
    <property type="evidence" value="ECO:0007669"/>
    <property type="project" value="InterPro"/>
</dbReference>
<dbReference type="GO" id="GO:0042073">
    <property type="term" value="P:intraciliary transport"/>
    <property type="evidence" value="ECO:0000266"/>
    <property type="project" value="RGD"/>
</dbReference>
<dbReference type="GO" id="GO:0060972">
    <property type="term" value="P:left/right pattern formation"/>
    <property type="evidence" value="ECO:0000266"/>
    <property type="project" value="RGD"/>
</dbReference>
<dbReference type="GO" id="GO:0043113">
    <property type="term" value="P:receptor clustering"/>
    <property type="evidence" value="ECO:0000266"/>
    <property type="project" value="RGD"/>
</dbReference>
<dbReference type="GO" id="GO:0010968">
    <property type="term" value="P:regulation of microtubule nucleation"/>
    <property type="evidence" value="ECO:0000266"/>
    <property type="project" value="RGD"/>
</dbReference>
<dbReference type="GO" id="GO:0006228">
    <property type="term" value="P:UTP biosynthetic process"/>
    <property type="evidence" value="ECO:0007669"/>
    <property type="project" value="InterPro"/>
</dbReference>
<dbReference type="CDD" id="cd04415">
    <property type="entry name" value="NDPk7A"/>
    <property type="match status" value="1"/>
</dbReference>
<dbReference type="CDD" id="cd04412">
    <property type="entry name" value="NDPk7B"/>
    <property type="match status" value="1"/>
</dbReference>
<dbReference type="FunFam" id="2.30.29.170:FF:000005">
    <property type="entry name" value="Nucleoside diphosphate kinase 7"/>
    <property type="match status" value="1"/>
</dbReference>
<dbReference type="FunFam" id="3.30.70.141:FF:000004">
    <property type="entry name" value="Nucleoside diphosphate kinase 7"/>
    <property type="match status" value="1"/>
</dbReference>
<dbReference type="FunFam" id="3.30.70.141:FF:000010">
    <property type="entry name" value="Nucleoside diphosphate kinase 7"/>
    <property type="match status" value="1"/>
</dbReference>
<dbReference type="Gene3D" id="2.30.29.170">
    <property type="match status" value="1"/>
</dbReference>
<dbReference type="Gene3D" id="3.30.70.141">
    <property type="entry name" value="Nucleoside diphosphate kinase-like domain"/>
    <property type="match status" value="2"/>
</dbReference>
<dbReference type="InterPro" id="IPR006602">
    <property type="entry name" value="DM10_dom"/>
</dbReference>
<dbReference type="InterPro" id="IPR034907">
    <property type="entry name" value="NDK-like_dom"/>
</dbReference>
<dbReference type="InterPro" id="IPR036850">
    <property type="entry name" value="NDK-like_dom_sf"/>
</dbReference>
<dbReference type="InterPro" id="IPR011410">
    <property type="entry name" value="NDPK7"/>
</dbReference>
<dbReference type="InterPro" id="IPR035525">
    <property type="entry name" value="NDPk7A"/>
</dbReference>
<dbReference type="InterPro" id="IPR037993">
    <property type="entry name" value="NDPk7B"/>
</dbReference>
<dbReference type="InterPro" id="IPR001564">
    <property type="entry name" value="Nucleoside_diP_kinase"/>
</dbReference>
<dbReference type="PANTHER" id="PTHR43109">
    <property type="entry name" value="NUCLEOSIDE DIPHOSPHATE KINASE 7"/>
    <property type="match status" value="1"/>
</dbReference>
<dbReference type="PANTHER" id="PTHR43109:SF2">
    <property type="entry name" value="NUCLEOSIDE DIPHOSPHATE KINASE 7"/>
    <property type="match status" value="1"/>
</dbReference>
<dbReference type="Pfam" id="PF00334">
    <property type="entry name" value="NDK"/>
    <property type="match status" value="2"/>
</dbReference>
<dbReference type="Pfam" id="PF25364">
    <property type="entry name" value="PH_NDK7_N"/>
    <property type="match status" value="1"/>
</dbReference>
<dbReference type="PIRSF" id="PIRSF036503">
    <property type="entry name" value="NDK7"/>
    <property type="match status" value="1"/>
</dbReference>
<dbReference type="PRINTS" id="PR01243">
    <property type="entry name" value="NUCDPKINASE"/>
</dbReference>
<dbReference type="SMART" id="SM00676">
    <property type="entry name" value="DM10"/>
    <property type="match status" value="1"/>
</dbReference>
<dbReference type="SMART" id="SM00562">
    <property type="entry name" value="NDK"/>
    <property type="match status" value="2"/>
</dbReference>
<dbReference type="SUPFAM" id="SSF54919">
    <property type="entry name" value="Nucleoside diphosphate kinase, NDK"/>
    <property type="match status" value="2"/>
</dbReference>
<dbReference type="PROSITE" id="PS51336">
    <property type="entry name" value="DM10"/>
    <property type="match status" value="1"/>
</dbReference>
<dbReference type="PROSITE" id="PS51374">
    <property type="entry name" value="NDPK_LIKE"/>
    <property type="match status" value="2"/>
</dbReference>
<gene>
    <name type="primary">Nme7</name>
</gene>
<accession>Q9QXL7</accession>
<accession>A6IDE2</accession>
<accession>Q6PAG9</accession>
<comment type="function">
    <text evidence="1 2">Possesses an intrinsic kinase activity. Displays 3'-5' exonuclease activity with a preference for single-stranded DNA (By similarity). Does not seem to have nucleoside diphosphate kinase activity (By similarity). Functional component of the gamma-tubulin ring complex, implicated in the regulation of the microtubule-nucleating activity of the gamma-tubulin ring complex in centrosomes, in a kinase activity-dependent manner (By similarity). Part of the dynein-decorated doublet microtubules (DMTs) in cilia axoneme, which is required for motile cilia beating (By similarity).</text>
</comment>
<comment type="subunit">
    <text evidence="1 2">Component of sperm flagellar doublet microtubules (By similarity). Component of the gamma-tubulin ring complex (By similarity).</text>
</comment>
<comment type="subcellular location">
    <subcellularLocation>
        <location evidence="2">Cytoplasm</location>
        <location evidence="2">Cytoskeleton</location>
        <location evidence="2">Microtubule organizing center</location>
        <location evidence="2">Centrosome</location>
    </subcellularLocation>
    <subcellularLocation>
        <location evidence="2">Nucleus</location>
    </subcellularLocation>
    <subcellularLocation>
        <location evidence="2">Cytoplasm</location>
    </subcellularLocation>
    <subcellularLocation>
        <location evidence="2">Cytoplasm</location>
        <location evidence="2">Cytoskeleton</location>
        <location evidence="2">Spindle</location>
    </subcellularLocation>
    <subcellularLocation>
        <location evidence="2">Cytoplasm</location>
        <location evidence="2">Cytoskeleton</location>
        <location evidence="2">Cilium axoneme</location>
    </subcellularLocation>
    <subcellularLocation>
        <location evidence="1">Cytoplasm</location>
        <location evidence="1">Cytoskeleton</location>
        <location evidence="1">Flagellum axoneme</location>
    </subcellularLocation>
    <subcellularLocation>
        <location evidence="2">Cell projection</location>
        <location evidence="2">Cilium</location>
    </subcellularLocation>
    <text evidence="2">Localizes to centrosomes through its assembly into gamma-tubulin ring complex. The centrosomal content of NME7 varies during the cell cycle, being highest in mitosis and lowest in early G1.</text>
</comment>
<comment type="tissue specificity">
    <text evidence="4 5">Widely expressed (PubMed:33916973). Expressed in the flagellum of epididymal sperm but not in testicular sperm (at protein level).</text>
</comment>
<comment type="domain">
    <text evidence="2">Contains 2 putative kinase domains (111-243 and 258-391 AA), the first one is involved in autophosphorylation and the other may be inactive.</text>
</comment>
<comment type="mass spectrometry"/>
<comment type="disruption phenotype">
    <text evidence="5">Knockdown of nme7 in embryos is semi-lethal, the majority of pups died prior to weaning. The most prominent phenotypes in surviving mice are hydrocephalus, situs inversus totalis, postnatal growth retardation, and sterility of both sexes.</text>
</comment>
<comment type="similarity">
    <text evidence="6">Belongs to the NDK family.</text>
</comment>
<organism>
    <name type="scientific">Rattus norvegicus</name>
    <name type="common">Rat</name>
    <dbReference type="NCBI Taxonomy" id="10116"/>
    <lineage>
        <taxon>Eukaryota</taxon>
        <taxon>Metazoa</taxon>
        <taxon>Chordata</taxon>
        <taxon>Craniata</taxon>
        <taxon>Vertebrata</taxon>
        <taxon>Euteleostomi</taxon>
        <taxon>Mammalia</taxon>
        <taxon>Eutheria</taxon>
        <taxon>Euarchontoglires</taxon>
        <taxon>Glires</taxon>
        <taxon>Rodentia</taxon>
        <taxon>Myomorpha</taxon>
        <taxon>Muroidea</taxon>
        <taxon>Muridae</taxon>
        <taxon>Murinae</taxon>
        <taxon>Rattus</taxon>
    </lineage>
</organism>
<name>NDK7_RAT</name>
<evidence type="ECO:0000250" key="1">
    <source>
        <dbReference type="UniProtKB" id="Q9QXL8"/>
    </source>
</evidence>
<evidence type="ECO:0000250" key="2">
    <source>
        <dbReference type="UniProtKB" id="Q9Y5B8"/>
    </source>
</evidence>
<evidence type="ECO:0000255" key="3">
    <source>
        <dbReference type="PROSITE-ProRule" id="PRU00665"/>
    </source>
</evidence>
<evidence type="ECO:0000269" key="4">
    <source>
    </source>
</evidence>
<evidence type="ECO:0000269" key="5">
    <source>
    </source>
</evidence>
<evidence type="ECO:0000305" key="6"/>
<proteinExistence type="evidence at protein level"/>
<protein>
    <recommendedName>
        <fullName>Nucleoside diphosphate kinase homolog 7</fullName>
        <shortName>NDK 7</shortName>
        <shortName>NDP kinase homolog 7</shortName>
    </recommendedName>
    <alternativeName>
        <fullName>3'-5' exonuclease NME7</fullName>
        <ecNumber evidence="2">3.1.-.-</ecNumber>
    </alternativeName>
    <alternativeName>
        <fullName>Protein kinase NME7</fullName>
        <ecNumber evidence="2">2.7.-.-</ecNumber>
    </alternativeName>
    <alternativeName>
        <fullName>nm23-H7</fullName>
    </alternativeName>
</protein>
<feature type="chain" id="PRO_0000137132" description="Nucleoside diphosphate kinase homolog 7">
    <location>
        <begin position="1"/>
        <end position="395"/>
    </location>
</feature>
<feature type="domain" description="DM10" evidence="3">
    <location>
        <begin position="22"/>
        <end position="110"/>
    </location>
</feature>
<feature type="sequence conflict" description="In Ref. 1; AAF20907." evidence="6" ref="1">
    <original>A</original>
    <variation>T</variation>
    <location>
        <position position="250"/>
    </location>
</feature>
<feature type="sequence conflict" description="In Ref. 1; AAF20907." evidence="6" ref="1">
    <original>VSE</original>
    <variation>LSD</variation>
    <location>
        <begin position="311"/>
        <end position="313"/>
    </location>
</feature>
<feature type="sequence conflict" description="In Ref. 3; AAH60314." evidence="6" ref="3">
    <original>N</original>
    <variation>I</variation>
    <location>
        <position position="363"/>
    </location>
</feature>
<keyword id="KW-0966">Cell projection</keyword>
<keyword id="KW-0969">Cilium</keyword>
<keyword id="KW-0963">Cytoplasm</keyword>
<keyword id="KW-0206">Cytoskeleton</keyword>
<keyword id="KW-0282">Flagellum</keyword>
<keyword id="KW-0378">Hydrolase</keyword>
<keyword id="KW-0418">Kinase</keyword>
<keyword id="KW-0539">Nucleus</keyword>
<keyword id="KW-1185">Reference proteome</keyword>
<keyword id="KW-0808">Transferase</keyword>
<reference key="1">
    <citation type="submission" date="1999-11" db="EMBL/GenBank/DDBJ databases">
        <authorList>
            <person name="Mehus J.G."/>
            <person name="Johnson J.D."/>
            <person name="Lambeth D.O."/>
        </authorList>
    </citation>
    <scope>NUCLEOTIDE SEQUENCE [MRNA]</scope>
</reference>
<reference key="2">
    <citation type="submission" date="2005-09" db="EMBL/GenBank/DDBJ databases">
        <authorList>
            <person name="Mural R.J."/>
            <person name="Adams M.D."/>
            <person name="Myers E.W."/>
            <person name="Smith H.O."/>
            <person name="Venter J.C."/>
        </authorList>
    </citation>
    <scope>NUCLEOTIDE SEQUENCE [LARGE SCALE GENOMIC DNA]</scope>
</reference>
<reference key="3">
    <citation type="journal article" date="2004" name="Genome Res.">
        <title>The status, quality, and expansion of the NIH full-length cDNA project: the Mammalian Gene Collection (MGC).</title>
        <authorList>
            <consortium name="The MGC Project Team"/>
        </authorList>
    </citation>
    <scope>NUCLEOTIDE SEQUENCE [LARGE SCALE MRNA]</scope>
</reference>
<reference key="4">
    <citation type="journal article" date="2011" name="J. Androl.">
        <title>Differential proteomics leads to identification of domain specific epididymal sperm proteins.</title>
        <authorList>
            <person name="Suryawanshi A.R."/>
            <person name="Khan S.A."/>
            <person name="Gajbhiye R.K."/>
            <person name="Gurav M.Y."/>
            <person name="Khole V.V."/>
        </authorList>
    </citation>
    <scope>IDENTIFICATION BY MASS SPECTROMETRY</scope>
    <scope>TISSUE SPECIFICITY</scope>
    <scope>MASS SPECTROMETRY</scope>
    <source>
        <strain>Holtzman</strain>
        <tissue>Sperm</tissue>
    </source>
</reference>
<reference key="5">
    <citation type="journal article" date="2021" name="Int. J. Mol. Sci.">
        <title>Semi-Lethal Primary Ciliary Dyskinesia in Rats Lacking the Nme7 Gene.</title>
        <authorList>
            <person name="Sedova L."/>
            <person name="Bukova I."/>
            <person name="Bazantova P."/>
            <person name="Petrezselyova S."/>
            <person name="Prochazka J."/>
            <person name="Skolnikova E."/>
            <person name="Zudova D."/>
            <person name="Vcelak J."/>
            <person name="Makovicky P."/>
            <person name="Bendlova B."/>
            <person name="Seda O."/>
            <person name="Sedlacek R."/>
        </authorList>
    </citation>
    <scope>DISRUPTION PHENOTYPE</scope>
    <scope>TISSUE SPECIFICITY</scope>
</reference>